<reference key="1">
    <citation type="journal article" date="2009" name="PLoS Genet.">
        <title>Organised genome dynamics in the Escherichia coli species results in highly diverse adaptive paths.</title>
        <authorList>
            <person name="Touchon M."/>
            <person name="Hoede C."/>
            <person name="Tenaillon O."/>
            <person name="Barbe V."/>
            <person name="Baeriswyl S."/>
            <person name="Bidet P."/>
            <person name="Bingen E."/>
            <person name="Bonacorsi S."/>
            <person name="Bouchier C."/>
            <person name="Bouvet O."/>
            <person name="Calteau A."/>
            <person name="Chiapello H."/>
            <person name="Clermont O."/>
            <person name="Cruveiller S."/>
            <person name="Danchin A."/>
            <person name="Diard M."/>
            <person name="Dossat C."/>
            <person name="Karoui M.E."/>
            <person name="Frapy E."/>
            <person name="Garry L."/>
            <person name="Ghigo J.M."/>
            <person name="Gilles A.M."/>
            <person name="Johnson J."/>
            <person name="Le Bouguenec C."/>
            <person name="Lescat M."/>
            <person name="Mangenot S."/>
            <person name="Martinez-Jehanne V."/>
            <person name="Matic I."/>
            <person name="Nassif X."/>
            <person name="Oztas S."/>
            <person name="Petit M.A."/>
            <person name="Pichon C."/>
            <person name="Rouy Z."/>
            <person name="Ruf C.S."/>
            <person name="Schneider D."/>
            <person name="Tourret J."/>
            <person name="Vacherie B."/>
            <person name="Vallenet D."/>
            <person name="Medigue C."/>
            <person name="Rocha E.P.C."/>
            <person name="Denamur E."/>
        </authorList>
    </citation>
    <scope>NUCLEOTIDE SEQUENCE [LARGE SCALE GENOMIC DNA]</scope>
    <source>
        <strain>ATCC 35469 / DSM 13698 / BCRC 15582 / CCUG 18766 / IAM 14443 / JCM 21226 / LMG 7866 / NBRC 102419 / NCTC 12128 / CDC 0568-73</strain>
    </source>
</reference>
<comment type="function">
    <text evidence="1">Catalyzes the transfer of 4-deoxy-4-formamido-L-arabinose from UDP to undecaprenyl phosphate. The modified arabinose is attached to lipid A and is required for resistance to polymyxin and cationic antimicrobial peptides.</text>
</comment>
<comment type="catalytic activity">
    <reaction evidence="1">
        <text>UDP-4-deoxy-4-formamido-beta-L-arabinose + di-trans,octa-cis-undecaprenyl phosphate = 4-deoxy-4-formamido-alpha-L-arabinopyranosyl di-trans,octa-cis-undecaprenyl phosphate + UDP</text>
        <dbReference type="Rhea" id="RHEA:27722"/>
        <dbReference type="ChEBI" id="CHEBI:58223"/>
        <dbReference type="ChEBI" id="CHEBI:58709"/>
        <dbReference type="ChEBI" id="CHEBI:58909"/>
        <dbReference type="ChEBI" id="CHEBI:60392"/>
        <dbReference type="EC" id="2.4.2.53"/>
    </reaction>
</comment>
<comment type="pathway">
    <text evidence="1">Glycolipid biosynthesis; 4-amino-4-deoxy-alpha-L-arabinose undecaprenyl phosphate biosynthesis; 4-amino-4-deoxy-alpha-L-arabinose undecaprenyl phosphate from UDP-4-deoxy-4-formamido-beta-L-arabinose and undecaprenyl phosphate: step 1/2.</text>
</comment>
<comment type="pathway">
    <text evidence="1">Bacterial outer membrane biogenesis; lipopolysaccharide biosynthesis.</text>
</comment>
<comment type="subcellular location">
    <subcellularLocation>
        <location evidence="1">Cell inner membrane</location>
        <topology evidence="1">Multi-pass membrane protein</topology>
    </subcellularLocation>
</comment>
<comment type="similarity">
    <text evidence="1">Belongs to the glycosyltransferase 2 family.</text>
</comment>
<organism>
    <name type="scientific">Escherichia fergusonii (strain ATCC 35469 / DSM 13698 / CCUG 18766 / IAM 14443 / JCM 21226 / LMG 7866 / NBRC 102419 / NCTC 12128 / CDC 0568-73)</name>
    <dbReference type="NCBI Taxonomy" id="585054"/>
    <lineage>
        <taxon>Bacteria</taxon>
        <taxon>Pseudomonadati</taxon>
        <taxon>Pseudomonadota</taxon>
        <taxon>Gammaproteobacteria</taxon>
        <taxon>Enterobacterales</taxon>
        <taxon>Enterobacteriaceae</taxon>
        <taxon>Escherichia</taxon>
    </lineage>
</organism>
<feature type="chain" id="PRO_1000137915" description="Undecaprenyl-phosphate 4-deoxy-4-formamido-L-arabinose transferase">
    <location>
        <begin position="1"/>
        <end position="326"/>
    </location>
</feature>
<feature type="topological domain" description="Cytoplasmic" evidence="1">
    <location>
        <begin position="1"/>
        <end position="235"/>
    </location>
</feature>
<feature type="transmembrane region" description="Helical" evidence="1">
    <location>
        <begin position="236"/>
        <end position="256"/>
    </location>
</feature>
<feature type="topological domain" description="Periplasmic" evidence="1">
    <location>
        <begin position="257"/>
        <end position="269"/>
    </location>
</feature>
<feature type="transmembrane region" description="Helical" evidence="1">
    <location>
        <begin position="270"/>
        <end position="290"/>
    </location>
</feature>
<feature type="topological domain" description="Cytoplasmic" evidence="1">
    <location>
        <begin position="291"/>
        <end position="326"/>
    </location>
</feature>
<name>ARNC_ESCF3</name>
<evidence type="ECO:0000255" key="1">
    <source>
        <dbReference type="HAMAP-Rule" id="MF_01164"/>
    </source>
</evidence>
<accession>B7LM77</accession>
<proteinExistence type="inferred from homology"/>
<sequence length="326" mass="36596">MFEIHPIKKVSVVIPVYNEQESLPELINRTTAACESLGKEYEILLIDDGSSDASAQMLVEASQAPDSHIVSILLNRNYGQHSAIMAGFSYVTGDLIITLDADLQNPPEEIPRLVAKADEGYDVVGTVRQNRQDSWFRKTASKMINRLIQRTTGKAMGDYGCMLRAYRRHIVDAMLHCHERSTFIPILANIFARQAVEIPVHHAEREFGESKYSFMRLINLMYDLVTCLTTTPLRMLSLLGSIIATSGFSLAILLVVLRLAFGSQWSGEGVFMLFAVLFTFIGAQFIGMGLLGEYIGRIYNDVRARPRYFVQKVIRPASSIDIEENH</sequence>
<gene>
    <name evidence="1" type="primary">arnC</name>
    <name type="ordered locus">EFER_0915</name>
</gene>
<dbReference type="EC" id="2.4.2.53" evidence="1"/>
<dbReference type="EMBL" id="CU928158">
    <property type="protein sequence ID" value="CAQ88450.1"/>
    <property type="molecule type" value="Genomic_DNA"/>
</dbReference>
<dbReference type="RefSeq" id="WP_000461628.1">
    <property type="nucleotide sequence ID" value="NC_011740.1"/>
</dbReference>
<dbReference type="SMR" id="B7LM77"/>
<dbReference type="CAZy" id="GT2">
    <property type="family name" value="Glycosyltransferase Family 2"/>
</dbReference>
<dbReference type="GeneID" id="75058026"/>
<dbReference type="KEGG" id="efe:EFER_0915"/>
<dbReference type="HOGENOM" id="CLU_033536_0_0_6"/>
<dbReference type="OrthoDB" id="9811884at2"/>
<dbReference type="UniPathway" id="UPA00030"/>
<dbReference type="UniPathway" id="UPA00036">
    <property type="reaction ID" value="UER00495"/>
</dbReference>
<dbReference type="Proteomes" id="UP000000745">
    <property type="component" value="Chromosome"/>
</dbReference>
<dbReference type="GO" id="GO:0005886">
    <property type="term" value="C:plasma membrane"/>
    <property type="evidence" value="ECO:0007669"/>
    <property type="project" value="UniProtKB-SubCell"/>
</dbReference>
<dbReference type="GO" id="GO:0016780">
    <property type="term" value="F:phosphotransferase activity, for other substituted phosphate groups"/>
    <property type="evidence" value="ECO:0007669"/>
    <property type="project" value="UniProtKB-UniRule"/>
</dbReference>
<dbReference type="GO" id="GO:0099621">
    <property type="term" value="F:undecaprenyl-phosphate 4-deoxy-4-formamido-L-arabinose transferase activity"/>
    <property type="evidence" value="ECO:0007669"/>
    <property type="project" value="UniProtKB-EC"/>
</dbReference>
<dbReference type="GO" id="GO:0036108">
    <property type="term" value="P:4-amino-4-deoxy-alpha-L-arabinopyranosyl undecaprenyl phosphate biosynthetic process"/>
    <property type="evidence" value="ECO:0007669"/>
    <property type="project" value="UniProtKB-UniRule"/>
</dbReference>
<dbReference type="GO" id="GO:0009245">
    <property type="term" value="P:lipid A biosynthetic process"/>
    <property type="evidence" value="ECO:0007669"/>
    <property type="project" value="UniProtKB-UniRule"/>
</dbReference>
<dbReference type="GO" id="GO:0009103">
    <property type="term" value="P:lipopolysaccharide biosynthetic process"/>
    <property type="evidence" value="ECO:0007669"/>
    <property type="project" value="UniProtKB-UniRule"/>
</dbReference>
<dbReference type="GO" id="GO:0046677">
    <property type="term" value="P:response to antibiotic"/>
    <property type="evidence" value="ECO:0007669"/>
    <property type="project" value="UniProtKB-KW"/>
</dbReference>
<dbReference type="CDD" id="cd04187">
    <property type="entry name" value="DPM1_like_bac"/>
    <property type="match status" value="1"/>
</dbReference>
<dbReference type="FunFam" id="3.90.550.10:FF:000019">
    <property type="entry name" value="Undecaprenyl-phosphate 4-deoxy-4-formamido-L-arabinose transferase"/>
    <property type="match status" value="1"/>
</dbReference>
<dbReference type="Gene3D" id="3.90.550.10">
    <property type="entry name" value="Spore Coat Polysaccharide Biosynthesis Protein SpsA, Chain A"/>
    <property type="match status" value="1"/>
</dbReference>
<dbReference type="HAMAP" id="MF_01164">
    <property type="entry name" value="ArnC_transfer"/>
    <property type="match status" value="1"/>
</dbReference>
<dbReference type="InterPro" id="IPR022857">
    <property type="entry name" value="ArnC_tfrase"/>
</dbReference>
<dbReference type="InterPro" id="IPR001173">
    <property type="entry name" value="Glyco_trans_2-like"/>
</dbReference>
<dbReference type="InterPro" id="IPR050256">
    <property type="entry name" value="Glycosyltransferase_2"/>
</dbReference>
<dbReference type="InterPro" id="IPR029044">
    <property type="entry name" value="Nucleotide-diphossugar_trans"/>
</dbReference>
<dbReference type="NCBIfam" id="NF007986">
    <property type="entry name" value="PRK10714.1"/>
    <property type="match status" value="1"/>
</dbReference>
<dbReference type="PANTHER" id="PTHR48090:SF3">
    <property type="entry name" value="UNDECAPRENYL-PHOSPHATE 4-DEOXY-4-FORMAMIDO-L-ARABINOSE TRANSFERASE"/>
    <property type="match status" value="1"/>
</dbReference>
<dbReference type="PANTHER" id="PTHR48090">
    <property type="entry name" value="UNDECAPRENYL-PHOSPHATE 4-DEOXY-4-FORMAMIDO-L-ARABINOSE TRANSFERASE-RELATED"/>
    <property type="match status" value="1"/>
</dbReference>
<dbReference type="Pfam" id="PF00535">
    <property type="entry name" value="Glycos_transf_2"/>
    <property type="match status" value="1"/>
</dbReference>
<dbReference type="SUPFAM" id="SSF53448">
    <property type="entry name" value="Nucleotide-diphospho-sugar transferases"/>
    <property type="match status" value="1"/>
</dbReference>
<keyword id="KW-0046">Antibiotic resistance</keyword>
<keyword id="KW-0997">Cell inner membrane</keyword>
<keyword id="KW-1003">Cell membrane</keyword>
<keyword id="KW-0328">Glycosyltransferase</keyword>
<keyword id="KW-0441">Lipid A biosynthesis</keyword>
<keyword id="KW-0444">Lipid biosynthesis</keyword>
<keyword id="KW-0443">Lipid metabolism</keyword>
<keyword id="KW-0448">Lipopolysaccharide biosynthesis</keyword>
<keyword id="KW-0472">Membrane</keyword>
<keyword id="KW-0808">Transferase</keyword>
<keyword id="KW-0812">Transmembrane</keyword>
<keyword id="KW-1133">Transmembrane helix</keyword>
<protein>
    <recommendedName>
        <fullName evidence="1">Undecaprenyl-phosphate 4-deoxy-4-formamido-L-arabinose transferase</fullName>
        <ecNumber evidence="1">2.4.2.53</ecNumber>
    </recommendedName>
    <alternativeName>
        <fullName evidence="1">Undecaprenyl-phosphate Ara4FN transferase</fullName>
        <shortName evidence="1">Ara4FN transferase</shortName>
    </alternativeName>
</protein>